<proteinExistence type="inferred from homology"/>
<evidence type="ECO:0000255" key="1">
    <source>
        <dbReference type="HAMAP-Rule" id="MF_01447"/>
    </source>
</evidence>
<organism>
    <name type="scientific">Methanococcus maripaludis (strain C6 / ATCC BAA-1332)</name>
    <dbReference type="NCBI Taxonomy" id="444158"/>
    <lineage>
        <taxon>Archaea</taxon>
        <taxon>Methanobacteriati</taxon>
        <taxon>Methanobacteriota</taxon>
        <taxon>Methanomada group</taxon>
        <taxon>Methanococci</taxon>
        <taxon>Methanococcales</taxon>
        <taxon>Methanococcaceae</taxon>
        <taxon>Methanococcus</taxon>
    </lineage>
</organism>
<reference key="1">
    <citation type="submission" date="2007-10" db="EMBL/GenBank/DDBJ databases">
        <title>Complete sequence of Methanococcus maripaludis C6.</title>
        <authorList>
            <consortium name="US DOE Joint Genome Institute"/>
            <person name="Copeland A."/>
            <person name="Lucas S."/>
            <person name="Lapidus A."/>
            <person name="Barry K."/>
            <person name="Glavina del Rio T."/>
            <person name="Dalin E."/>
            <person name="Tice H."/>
            <person name="Pitluck S."/>
            <person name="Clum A."/>
            <person name="Schmutz J."/>
            <person name="Larimer F."/>
            <person name="Land M."/>
            <person name="Hauser L."/>
            <person name="Kyrpides N."/>
            <person name="Mikhailova N."/>
            <person name="Sieprawska-Lupa M."/>
            <person name="Whitman W.B."/>
            <person name="Richardson P."/>
        </authorList>
    </citation>
    <scope>NUCLEOTIDE SEQUENCE [LARGE SCALE GENOMIC DNA]</scope>
    <source>
        <strain>C6 / ATCC BAA-1332</strain>
    </source>
</reference>
<protein>
    <recommendedName>
        <fullName evidence="1">Probable bifunctional tRNA threonylcarbamoyladenosine biosynthesis protein</fullName>
    </recommendedName>
    <domain>
        <recommendedName>
            <fullName evidence="1">tRNA N6-adenosine threonylcarbamoyltransferase</fullName>
            <ecNumber evidence="1">2.3.1.234</ecNumber>
        </recommendedName>
        <alternativeName>
            <fullName>N6-L-threonylcarbamoyladenine synthase</fullName>
            <shortName>t(6)A synthase</shortName>
        </alternativeName>
        <alternativeName>
            <fullName evidence="1">t(6)A37 threonylcarbamoyladenosine biosynthesis protein Kae1</fullName>
        </alternativeName>
        <alternativeName>
            <fullName evidence="1">tRNA threonylcarbamoyladenosine biosynthesis protein Kae1</fullName>
        </alternativeName>
    </domain>
    <domain>
        <recommendedName>
            <fullName evidence="1">Serine/threonine-protein kinase Bud32</fullName>
            <ecNumber evidence="1">2.7.11.1</ecNumber>
        </recommendedName>
    </domain>
</protein>
<keyword id="KW-0012">Acyltransferase</keyword>
<keyword id="KW-0067">ATP-binding</keyword>
<keyword id="KW-0963">Cytoplasm</keyword>
<keyword id="KW-0408">Iron</keyword>
<keyword id="KW-0418">Kinase</keyword>
<keyword id="KW-0479">Metal-binding</keyword>
<keyword id="KW-0511">Multifunctional enzyme</keyword>
<keyword id="KW-0547">Nucleotide-binding</keyword>
<keyword id="KW-0723">Serine/threonine-protein kinase</keyword>
<keyword id="KW-0808">Transferase</keyword>
<keyword id="KW-0819">tRNA processing</keyword>
<feature type="chain" id="PRO_1000146051" description="Probable bifunctional tRNA threonylcarbamoyladenosine biosynthesis protein">
    <location>
        <begin position="1"/>
        <end position="543"/>
    </location>
</feature>
<feature type="domain" description="Protein kinase" evidence="1">
    <location>
        <begin position="342"/>
        <end position="543"/>
    </location>
</feature>
<feature type="region of interest" description="Kae1">
    <location>
        <begin position="1"/>
        <end position="329"/>
    </location>
</feature>
<feature type="active site" description="Proton acceptor; for kinase activity" evidence="1">
    <location>
        <position position="461"/>
    </location>
</feature>
<feature type="binding site" evidence="1">
    <location>
        <position position="112"/>
    </location>
    <ligand>
        <name>Fe cation</name>
        <dbReference type="ChEBI" id="CHEBI:24875"/>
    </ligand>
</feature>
<feature type="binding site" evidence="1">
    <location>
        <position position="116"/>
    </location>
    <ligand>
        <name>Fe cation</name>
        <dbReference type="ChEBI" id="CHEBI:24875"/>
    </ligand>
</feature>
<feature type="binding site" evidence="1">
    <location>
        <begin position="133"/>
        <end position="137"/>
    </location>
    <ligand>
        <name>L-threonylcarbamoyladenylate</name>
        <dbReference type="ChEBI" id="CHEBI:73682"/>
    </ligand>
</feature>
<feature type="binding site" evidence="1">
    <location>
        <position position="133"/>
    </location>
    <ligand>
        <name>Fe cation</name>
        <dbReference type="ChEBI" id="CHEBI:24875"/>
    </ligand>
</feature>
<feature type="binding site" evidence="1">
    <location>
        <position position="165"/>
    </location>
    <ligand>
        <name>L-threonylcarbamoyladenylate</name>
        <dbReference type="ChEBI" id="CHEBI:73682"/>
    </ligand>
</feature>
<feature type="binding site" evidence="1">
    <location>
        <position position="178"/>
    </location>
    <ligand>
        <name>L-threonylcarbamoyladenylate</name>
        <dbReference type="ChEBI" id="CHEBI:73682"/>
    </ligand>
</feature>
<feature type="binding site" evidence="1">
    <location>
        <position position="182"/>
    </location>
    <ligand>
        <name>L-threonylcarbamoyladenylate</name>
        <dbReference type="ChEBI" id="CHEBI:73682"/>
    </ligand>
</feature>
<feature type="binding site" evidence="1">
    <location>
        <position position="262"/>
    </location>
    <ligand>
        <name>L-threonylcarbamoyladenylate</name>
        <dbReference type="ChEBI" id="CHEBI:73682"/>
    </ligand>
</feature>
<feature type="binding site" evidence="1">
    <location>
        <position position="290"/>
    </location>
    <ligand>
        <name>Fe cation</name>
        <dbReference type="ChEBI" id="CHEBI:24875"/>
    </ligand>
</feature>
<feature type="binding site" evidence="1">
    <location>
        <begin position="348"/>
        <end position="356"/>
    </location>
    <ligand>
        <name>ATP</name>
        <dbReference type="ChEBI" id="CHEBI:30616"/>
    </ligand>
</feature>
<feature type="binding site" evidence="1">
    <location>
        <position position="369"/>
    </location>
    <ligand>
        <name>ATP</name>
        <dbReference type="ChEBI" id="CHEBI:30616"/>
    </ligand>
</feature>
<sequence>MDISKDLICIGFEGTAEKTGVGIINSKGEVLFNKTIIYTPPVQGIHPREAADHHAETFVKLLKEALAVVPLEKIDLVSFSLGPGLGPSLRVTATTARALSLSINKPIIGVNHCISHVEIGKLKTDAVDPLTLYVSGGNTQVLAYTGKKYRVIGETLDIAIGNCLDQFARHCNMPHPGGVYVEKYAKNGNKFIKLPYTVKGMDISLSGLLTAAMKKYDSKERIEDVCHSLQETSFSMLTEITERALAHTNKAEVMLVGGVAANNRLKEMLNVMCAEQNVDFYVPEREFCGDNGAMIAWLGILQYLNGKRMDLNDTKPISNYRSDMVEVNWIPEENNENIKSRIIPEHLIGKGAEADISKGRYLEFESITKERVKKGYRILELDELIRMRRTVKEARFLTAIKELGIYAPSIFDIDKERKKITMSYIHGKIAKEKIEEGNLDFCEDLGKIIGKMHVGGIVHNDLTTSNFIVSDNTFVIDFGLGKYSDLVEDKAIDLIVLKKSIMSIHYDKFDLVWNKIVEGYKTYEMSESVLECMKEVEKRARYL</sequence>
<accession>A9A6L6</accession>
<dbReference type="EC" id="2.3.1.234" evidence="1"/>
<dbReference type="EC" id="2.7.11.1" evidence="1"/>
<dbReference type="EMBL" id="CP000867">
    <property type="protein sequence ID" value="ABX01312.1"/>
    <property type="molecule type" value="Genomic_DNA"/>
</dbReference>
<dbReference type="SMR" id="A9A6L6"/>
<dbReference type="STRING" id="444158.MmarC6_0494"/>
<dbReference type="KEGG" id="mmx:MmarC6_0494"/>
<dbReference type="eggNOG" id="arCOG01183">
    <property type="taxonomic scope" value="Archaea"/>
</dbReference>
<dbReference type="eggNOG" id="arCOG01185">
    <property type="taxonomic scope" value="Archaea"/>
</dbReference>
<dbReference type="HOGENOM" id="CLU_023208_2_2_2"/>
<dbReference type="OrthoDB" id="6818at2157"/>
<dbReference type="PhylomeDB" id="A9A6L6"/>
<dbReference type="GO" id="GO:0005737">
    <property type="term" value="C:cytoplasm"/>
    <property type="evidence" value="ECO:0007669"/>
    <property type="project" value="UniProtKB-SubCell"/>
</dbReference>
<dbReference type="GO" id="GO:0000408">
    <property type="term" value="C:EKC/KEOPS complex"/>
    <property type="evidence" value="ECO:0007669"/>
    <property type="project" value="InterPro"/>
</dbReference>
<dbReference type="GO" id="GO:0005524">
    <property type="term" value="F:ATP binding"/>
    <property type="evidence" value="ECO:0007669"/>
    <property type="project" value="UniProtKB-UniRule"/>
</dbReference>
<dbReference type="GO" id="GO:0005506">
    <property type="term" value="F:iron ion binding"/>
    <property type="evidence" value="ECO:0007669"/>
    <property type="project" value="UniProtKB-UniRule"/>
</dbReference>
<dbReference type="GO" id="GO:0004222">
    <property type="term" value="F:metalloendopeptidase activity"/>
    <property type="evidence" value="ECO:0007669"/>
    <property type="project" value="InterPro"/>
</dbReference>
<dbReference type="GO" id="GO:0061711">
    <property type="term" value="F:N(6)-L-threonylcarbamoyladenine synthase activity"/>
    <property type="evidence" value="ECO:0007669"/>
    <property type="project" value="UniProtKB-EC"/>
</dbReference>
<dbReference type="GO" id="GO:0106310">
    <property type="term" value="F:protein serine kinase activity"/>
    <property type="evidence" value="ECO:0007669"/>
    <property type="project" value="RHEA"/>
</dbReference>
<dbReference type="GO" id="GO:0004674">
    <property type="term" value="F:protein serine/threonine kinase activity"/>
    <property type="evidence" value="ECO:0007669"/>
    <property type="project" value="UniProtKB-KW"/>
</dbReference>
<dbReference type="GO" id="GO:0004712">
    <property type="term" value="F:protein serine/threonine/tyrosine kinase activity"/>
    <property type="evidence" value="ECO:0007669"/>
    <property type="project" value="UniProtKB-UniRule"/>
</dbReference>
<dbReference type="GO" id="GO:0008270">
    <property type="term" value="F:zinc ion binding"/>
    <property type="evidence" value="ECO:0007669"/>
    <property type="project" value="InterPro"/>
</dbReference>
<dbReference type="GO" id="GO:0002949">
    <property type="term" value="P:tRNA threonylcarbamoyladenosine modification"/>
    <property type="evidence" value="ECO:0007669"/>
    <property type="project" value="UniProtKB-UniRule"/>
</dbReference>
<dbReference type="CDD" id="cd24131">
    <property type="entry name" value="ASKHA_NBD_Kae1_arch_bac"/>
    <property type="match status" value="1"/>
</dbReference>
<dbReference type="FunFam" id="3.30.420.40:FF:000038">
    <property type="entry name" value="Probable tRNA N6-adenosine threonylcarbamoyltransferase"/>
    <property type="match status" value="1"/>
</dbReference>
<dbReference type="Gene3D" id="3.30.420.40">
    <property type="match status" value="2"/>
</dbReference>
<dbReference type="Gene3D" id="3.30.200.20">
    <property type="entry name" value="Phosphorylase Kinase, domain 1"/>
    <property type="match status" value="1"/>
</dbReference>
<dbReference type="Gene3D" id="1.10.510.10">
    <property type="entry name" value="Transferase(Phosphotransferase) domain 1"/>
    <property type="match status" value="1"/>
</dbReference>
<dbReference type="HAMAP" id="MF_01446">
    <property type="entry name" value="Kae1"/>
    <property type="match status" value="1"/>
</dbReference>
<dbReference type="HAMAP" id="MF_01447">
    <property type="entry name" value="Kae1_Bud32_arch"/>
    <property type="match status" value="1"/>
</dbReference>
<dbReference type="InterPro" id="IPR043129">
    <property type="entry name" value="ATPase_NBD"/>
</dbReference>
<dbReference type="InterPro" id="IPR022495">
    <property type="entry name" value="Bud32"/>
</dbReference>
<dbReference type="InterPro" id="IPR000905">
    <property type="entry name" value="Gcp-like_dom"/>
</dbReference>
<dbReference type="InterPro" id="IPR017861">
    <property type="entry name" value="KAE1/TsaD"/>
</dbReference>
<dbReference type="InterPro" id="IPR034680">
    <property type="entry name" value="Kae1_archaea_euk"/>
</dbReference>
<dbReference type="InterPro" id="IPR011009">
    <property type="entry name" value="Kinase-like_dom_sf"/>
</dbReference>
<dbReference type="InterPro" id="IPR018934">
    <property type="entry name" value="RIO_dom"/>
</dbReference>
<dbReference type="InterPro" id="IPR009220">
    <property type="entry name" value="tRNA_threonyl_synthase/kinase"/>
</dbReference>
<dbReference type="InterPro" id="IPR008266">
    <property type="entry name" value="Tyr_kinase_AS"/>
</dbReference>
<dbReference type="NCBIfam" id="TIGR03724">
    <property type="entry name" value="arch_bud32"/>
    <property type="match status" value="1"/>
</dbReference>
<dbReference type="NCBIfam" id="TIGR03722">
    <property type="entry name" value="arch_KAE1"/>
    <property type="match status" value="1"/>
</dbReference>
<dbReference type="NCBIfam" id="TIGR00329">
    <property type="entry name" value="gcp_kae1"/>
    <property type="match status" value="1"/>
</dbReference>
<dbReference type="NCBIfam" id="NF007174">
    <property type="entry name" value="PRK09605.1"/>
    <property type="match status" value="1"/>
</dbReference>
<dbReference type="PANTHER" id="PTHR11735">
    <property type="entry name" value="TRNA N6-ADENOSINE THREONYLCARBAMOYLTRANSFERASE"/>
    <property type="match status" value="1"/>
</dbReference>
<dbReference type="PANTHER" id="PTHR11735:SF14">
    <property type="entry name" value="TRNA N6-ADENOSINE THREONYLCARBAMOYLTRANSFERASE"/>
    <property type="match status" value="1"/>
</dbReference>
<dbReference type="Pfam" id="PF01163">
    <property type="entry name" value="RIO1"/>
    <property type="match status" value="1"/>
</dbReference>
<dbReference type="Pfam" id="PF00814">
    <property type="entry name" value="TsaD"/>
    <property type="match status" value="1"/>
</dbReference>
<dbReference type="PIRSF" id="PIRSF036401">
    <property type="entry name" value="Gcp_STYKS"/>
    <property type="match status" value="1"/>
</dbReference>
<dbReference type="PRINTS" id="PR00789">
    <property type="entry name" value="OSIALOPTASE"/>
</dbReference>
<dbReference type="SUPFAM" id="SSF53067">
    <property type="entry name" value="Actin-like ATPase domain"/>
    <property type="match status" value="1"/>
</dbReference>
<dbReference type="SUPFAM" id="SSF56112">
    <property type="entry name" value="Protein kinase-like (PK-like)"/>
    <property type="match status" value="1"/>
</dbReference>
<dbReference type="PROSITE" id="PS00109">
    <property type="entry name" value="PROTEIN_KINASE_TYR"/>
    <property type="match status" value="1"/>
</dbReference>
<gene>
    <name type="ordered locus">MmarC6_0494</name>
</gene>
<comment type="function">
    <text evidence="1">Required for the formation of a threonylcarbamoyl group on adenosine at position 37 (t(6)A37) in tRNAs that read codons beginning with adenine. Is a component of the KEOPS complex that is probably involved in the transfer of the threonylcarbamoyl moiety of threonylcarbamoyl-AMP (TC-AMP) to the N6 group of A37. The Kae1 domain likely plays a direct catalytic role in this reaction. The Bud32 domain probably displays kinase activity that regulates Kae1 function.</text>
</comment>
<comment type="catalytic activity">
    <reaction evidence="1">
        <text>L-seryl-[protein] + ATP = O-phospho-L-seryl-[protein] + ADP + H(+)</text>
        <dbReference type="Rhea" id="RHEA:17989"/>
        <dbReference type="Rhea" id="RHEA-COMP:9863"/>
        <dbReference type="Rhea" id="RHEA-COMP:11604"/>
        <dbReference type="ChEBI" id="CHEBI:15378"/>
        <dbReference type="ChEBI" id="CHEBI:29999"/>
        <dbReference type="ChEBI" id="CHEBI:30616"/>
        <dbReference type="ChEBI" id="CHEBI:83421"/>
        <dbReference type="ChEBI" id="CHEBI:456216"/>
        <dbReference type="EC" id="2.7.11.1"/>
    </reaction>
</comment>
<comment type="catalytic activity">
    <reaction evidence="1">
        <text>L-threonyl-[protein] + ATP = O-phospho-L-threonyl-[protein] + ADP + H(+)</text>
        <dbReference type="Rhea" id="RHEA:46608"/>
        <dbReference type="Rhea" id="RHEA-COMP:11060"/>
        <dbReference type="Rhea" id="RHEA-COMP:11605"/>
        <dbReference type="ChEBI" id="CHEBI:15378"/>
        <dbReference type="ChEBI" id="CHEBI:30013"/>
        <dbReference type="ChEBI" id="CHEBI:30616"/>
        <dbReference type="ChEBI" id="CHEBI:61977"/>
        <dbReference type="ChEBI" id="CHEBI:456216"/>
        <dbReference type="EC" id="2.7.11.1"/>
    </reaction>
</comment>
<comment type="catalytic activity">
    <reaction evidence="1">
        <text>L-threonylcarbamoyladenylate + adenosine(37) in tRNA = N(6)-L-threonylcarbamoyladenosine(37) in tRNA + AMP + H(+)</text>
        <dbReference type="Rhea" id="RHEA:37059"/>
        <dbReference type="Rhea" id="RHEA-COMP:10162"/>
        <dbReference type="Rhea" id="RHEA-COMP:10163"/>
        <dbReference type="ChEBI" id="CHEBI:15378"/>
        <dbReference type="ChEBI" id="CHEBI:73682"/>
        <dbReference type="ChEBI" id="CHEBI:74411"/>
        <dbReference type="ChEBI" id="CHEBI:74418"/>
        <dbReference type="ChEBI" id="CHEBI:456215"/>
        <dbReference type="EC" id="2.3.1.234"/>
    </reaction>
</comment>
<comment type="cofactor">
    <cofactor evidence="1">
        <name>Fe(2+)</name>
        <dbReference type="ChEBI" id="CHEBI:29033"/>
    </cofactor>
    <text evidence="1">Binds 1 Fe(2+) ion per subunit.</text>
</comment>
<comment type="subunit">
    <text evidence="1">Component of the KEOPS complex that consists of Kae1, Bud32, Cgi121 and Pcc1; the whole complex dimerizes.</text>
</comment>
<comment type="subcellular location">
    <subcellularLocation>
        <location evidence="1">Cytoplasm</location>
    </subcellularLocation>
</comment>
<comment type="similarity">
    <text evidence="1">In the N-terminal section; belongs to the KAE1 / TsaD family.</text>
</comment>
<comment type="similarity">
    <text evidence="1">In the C-terminal section; belongs to the protein kinase superfamily. Tyr protein kinase family. BUD32 subfamily.</text>
</comment>
<name>KAE1B_METM6</name>